<feature type="signal peptide" evidence="2">
    <location>
        <begin position="1"/>
        <end position="23"/>
    </location>
</feature>
<feature type="peptide" id="PRO_0000428711" description="Peptide Ctri9819">
    <location>
        <begin position="24"/>
        <end position="34"/>
    </location>
</feature>
<feature type="propeptide" id="PRO_0000428712" evidence="1">
    <location>
        <begin position="38"/>
        <end position="71"/>
    </location>
</feature>
<feature type="modified residue" description="Leucine amide" evidence="1">
    <location>
        <position position="34"/>
    </location>
</feature>
<comment type="function">
    <text evidence="1">Antimicrobial peptide.</text>
</comment>
<comment type="subcellular location">
    <subcellularLocation>
        <location evidence="1">Secreted</location>
    </subcellularLocation>
</comment>
<comment type="tissue specificity">
    <text evidence="3">Expressed by the venom gland.</text>
</comment>
<comment type="miscellaneous">
    <text evidence="4">Shows a low ability to inhibit hepatitis C virus (HCV) infection in Huh7.5.1 cells.</text>
</comment>
<comment type="similarity">
    <text evidence="3">Belongs to the non-disulfide-bridged peptide (NDBP) superfamily. Short antimicrobial peptide (group 4) family.</text>
</comment>
<accession>P0DMG0</accession>
<proteinExistence type="inferred from homology"/>
<protein>
    <recommendedName>
        <fullName>Peptide Ctri9819</fullName>
    </recommendedName>
</protein>
<keyword id="KW-0027">Amidation</keyword>
<keyword id="KW-0929">Antimicrobial</keyword>
<keyword id="KW-0930">Antiviral protein</keyword>
<keyword id="KW-0964">Secreted</keyword>
<keyword id="KW-0732">Signal</keyword>
<name>NDB4R_CHATC</name>
<dbReference type="GO" id="GO:0005576">
    <property type="term" value="C:extracellular region"/>
    <property type="evidence" value="ECO:0007669"/>
    <property type="project" value="UniProtKB-SubCell"/>
</dbReference>
<dbReference type="GO" id="GO:0050688">
    <property type="term" value="P:regulation of defense response to virus"/>
    <property type="evidence" value="ECO:0007669"/>
    <property type="project" value="UniProtKB-KW"/>
</dbReference>
<evidence type="ECO:0000250" key="1"/>
<evidence type="ECO:0000255" key="2"/>
<evidence type="ECO:0000305" key="3"/>
<evidence type="ECO:0000305" key="4">
    <source>
    </source>
</evidence>
<sequence>MKTVSTVAILAIFLLIVITTIETNRILPTLIGPLGRRSKLETFKRIARTLSAGISAKRSLEDVNSLTGMSS</sequence>
<reference key="1">
    <citation type="journal article" date="2013" name="Biomaterials">
        <title>Design of histidine-rich peptides with enhanced bioavailability and inhibitory activity against hepatitis C virus.</title>
        <authorList>
            <person name="Hong W."/>
            <person name="Zhang R."/>
            <person name="Di Z."/>
            <person name="He Y."/>
            <person name="Zhao Z."/>
            <person name="Hu J."/>
            <person name="Wu Y."/>
            <person name="Li W."/>
            <person name="Cao Z."/>
        </authorList>
    </citation>
    <scope>NUCLEOTIDE SEQUENCE [MRNA]</scope>
    <scope>SYNTHESIS OF 24-34</scope>
    <source>
        <tissue>Venom gland</tissue>
    </source>
</reference>
<organism>
    <name type="scientific">Chaerilus tricostatus</name>
    <name type="common">Scorpion</name>
    <dbReference type="NCBI Taxonomy" id="1055734"/>
    <lineage>
        <taxon>Eukaryota</taxon>
        <taxon>Metazoa</taxon>
        <taxon>Ecdysozoa</taxon>
        <taxon>Arthropoda</taxon>
        <taxon>Chelicerata</taxon>
        <taxon>Arachnida</taxon>
        <taxon>Scorpiones</taxon>
        <taxon>Chaerilida</taxon>
        <taxon>Chaeriloidea</taxon>
        <taxon>Chaerilidae</taxon>
        <taxon>Chaerilus</taxon>
    </lineage>
</organism>